<dbReference type="EC" id="2.7.7.49"/>
<dbReference type="EC" id="2.7.7.7"/>
<dbReference type="EC" id="3.1.26.4"/>
<dbReference type="EC" id="3.4.23.-"/>
<dbReference type="EC" id="2.7.7.-" evidence="2"/>
<dbReference type="EC" id="3.1.-.-" evidence="2"/>
<dbReference type="EMBL" id="M74895">
    <property type="protein sequence ID" value="AAA47796.1"/>
    <property type="status" value="ALT_INIT"/>
    <property type="molecule type" value="Genomic_DNA"/>
</dbReference>
<dbReference type="RefSeq" id="YP_001956722.2">
    <property type="nucleotide sequence ID" value="NC_010820.1"/>
</dbReference>
<dbReference type="SMR" id="P27401"/>
<dbReference type="MEROPS" id="A09.001"/>
<dbReference type="GeneID" id="6386654"/>
<dbReference type="KEGG" id="vg:6386654"/>
<dbReference type="Proteomes" id="UP000007217">
    <property type="component" value="Segment"/>
</dbReference>
<dbReference type="GO" id="GO:0043657">
    <property type="term" value="C:host cell"/>
    <property type="evidence" value="ECO:0007669"/>
    <property type="project" value="GOC"/>
</dbReference>
<dbReference type="GO" id="GO:0030430">
    <property type="term" value="C:host cell cytoplasm"/>
    <property type="evidence" value="ECO:0007669"/>
    <property type="project" value="UniProtKB-SubCell"/>
</dbReference>
<dbReference type="GO" id="GO:0042025">
    <property type="term" value="C:host cell nucleus"/>
    <property type="evidence" value="ECO:0007669"/>
    <property type="project" value="UniProtKB-SubCell"/>
</dbReference>
<dbReference type="GO" id="GO:0044423">
    <property type="term" value="C:virion component"/>
    <property type="evidence" value="ECO:0007669"/>
    <property type="project" value="UniProtKB-KW"/>
</dbReference>
<dbReference type="GO" id="GO:0004190">
    <property type="term" value="F:aspartic-type endopeptidase activity"/>
    <property type="evidence" value="ECO:0007669"/>
    <property type="project" value="UniProtKB-KW"/>
</dbReference>
<dbReference type="GO" id="GO:0003887">
    <property type="term" value="F:DNA-directed DNA polymerase activity"/>
    <property type="evidence" value="ECO:0007669"/>
    <property type="project" value="UniProtKB-KW"/>
</dbReference>
<dbReference type="GO" id="GO:0046872">
    <property type="term" value="F:metal ion binding"/>
    <property type="evidence" value="ECO:0007669"/>
    <property type="project" value="UniProtKB-KW"/>
</dbReference>
<dbReference type="GO" id="GO:0003723">
    <property type="term" value="F:RNA binding"/>
    <property type="evidence" value="ECO:0007669"/>
    <property type="project" value="UniProtKB-KW"/>
</dbReference>
<dbReference type="GO" id="GO:0003964">
    <property type="term" value="F:RNA-directed DNA polymerase activity"/>
    <property type="evidence" value="ECO:0007669"/>
    <property type="project" value="UniProtKB-KW"/>
</dbReference>
<dbReference type="GO" id="GO:0004523">
    <property type="term" value="F:RNA-DNA hybrid ribonuclease activity"/>
    <property type="evidence" value="ECO:0007669"/>
    <property type="project" value="UniProtKB-EC"/>
</dbReference>
<dbReference type="GO" id="GO:0015074">
    <property type="term" value="P:DNA integration"/>
    <property type="evidence" value="ECO:0007669"/>
    <property type="project" value="UniProtKB-KW"/>
</dbReference>
<dbReference type="GO" id="GO:0006310">
    <property type="term" value="P:DNA recombination"/>
    <property type="evidence" value="ECO:0007669"/>
    <property type="project" value="UniProtKB-KW"/>
</dbReference>
<dbReference type="GO" id="GO:0075713">
    <property type="term" value="P:establishment of integrated proviral latency"/>
    <property type="evidence" value="ECO:0007669"/>
    <property type="project" value="UniProtKB-KW"/>
</dbReference>
<dbReference type="GO" id="GO:0006508">
    <property type="term" value="P:proteolysis"/>
    <property type="evidence" value="ECO:0007669"/>
    <property type="project" value="UniProtKB-KW"/>
</dbReference>
<dbReference type="GO" id="GO:0046718">
    <property type="term" value="P:symbiont entry into host cell"/>
    <property type="evidence" value="ECO:0007669"/>
    <property type="project" value="UniProtKB-KW"/>
</dbReference>
<dbReference type="GO" id="GO:0044826">
    <property type="term" value="P:viral genome integration into host DNA"/>
    <property type="evidence" value="ECO:0007669"/>
    <property type="project" value="UniProtKB-KW"/>
</dbReference>
<dbReference type="GO" id="GO:0075732">
    <property type="term" value="P:viral penetration into host nucleus"/>
    <property type="evidence" value="ECO:0007669"/>
    <property type="project" value="UniProtKB-KW"/>
</dbReference>
<dbReference type="FunFam" id="3.30.420.10:FF:000263">
    <property type="entry name" value="Pro-Pol polyprotein"/>
    <property type="match status" value="1"/>
</dbReference>
<dbReference type="Gene3D" id="1.10.340.70">
    <property type="match status" value="1"/>
</dbReference>
<dbReference type="Gene3D" id="2.30.30.140">
    <property type="match status" value="1"/>
</dbReference>
<dbReference type="Gene3D" id="3.30.70.270">
    <property type="match status" value="2"/>
</dbReference>
<dbReference type="Gene3D" id="6.10.20.110">
    <property type="match status" value="1"/>
</dbReference>
<dbReference type="Gene3D" id="2.40.70.10">
    <property type="entry name" value="Acid Proteases"/>
    <property type="match status" value="1"/>
</dbReference>
<dbReference type="Gene3D" id="3.10.10.10">
    <property type="entry name" value="HIV Type 1 Reverse Transcriptase, subunit A, domain 1"/>
    <property type="match status" value="1"/>
</dbReference>
<dbReference type="Gene3D" id="3.30.420.10">
    <property type="entry name" value="Ribonuclease H-like superfamily/Ribonuclease H"/>
    <property type="match status" value="2"/>
</dbReference>
<dbReference type="InterPro" id="IPR043502">
    <property type="entry name" value="DNA/RNA_pol_sf"/>
</dbReference>
<dbReference type="InterPro" id="IPR001584">
    <property type="entry name" value="Integrase_cat-core"/>
</dbReference>
<dbReference type="InterPro" id="IPR041588">
    <property type="entry name" value="Integrase_H2C2"/>
</dbReference>
<dbReference type="InterPro" id="IPR021109">
    <property type="entry name" value="Peptidase_aspartic_dom_sf"/>
</dbReference>
<dbReference type="InterPro" id="IPR050951">
    <property type="entry name" value="Retrovirus_Pol_polyprotein"/>
</dbReference>
<dbReference type="InterPro" id="IPR043128">
    <property type="entry name" value="Rev_trsase/Diguanyl_cyclase"/>
</dbReference>
<dbReference type="InterPro" id="IPR012337">
    <property type="entry name" value="RNaseH-like_sf"/>
</dbReference>
<dbReference type="InterPro" id="IPR002156">
    <property type="entry name" value="RNaseH_domain"/>
</dbReference>
<dbReference type="InterPro" id="IPR036397">
    <property type="entry name" value="RNaseH_sf"/>
</dbReference>
<dbReference type="InterPro" id="IPR000477">
    <property type="entry name" value="RT_dom"/>
</dbReference>
<dbReference type="InterPro" id="IPR040903">
    <property type="entry name" value="SH3_11"/>
</dbReference>
<dbReference type="InterPro" id="IPR001641">
    <property type="entry name" value="Spumavirus_A9"/>
</dbReference>
<dbReference type="PANTHER" id="PTHR37984">
    <property type="entry name" value="PROTEIN CBG26694"/>
    <property type="match status" value="1"/>
</dbReference>
<dbReference type="PANTHER" id="PTHR37984:SF5">
    <property type="entry name" value="PROTEIN NYNRIN-LIKE"/>
    <property type="match status" value="1"/>
</dbReference>
<dbReference type="Pfam" id="PF17921">
    <property type="entry name" value="Integrase_H2C2"/>
    <property type="match status" value="1"/>
</dbReference>
<dbReference type="Pfam" id="PF00075">
    <property type="entry name" value="RNase_H"/>
    <property type="match status" value="1"/>
</dbReference>
<dbReference type="Pfam" id="PF00665">
    <property type="entry name" value="rve"/>
    <property type="match status" value="1"/>
</dbReference>
<dbReference type="Pfam" id="PF00078">
    <property type="entry name" value="RVT_1"/>
    <property type="match status" value="1"/>
</dbReference>
<dbReference type="Pfam" id="PF18103">
    <property type="entry name" value="SH3_11"/>
    <property type="match status" value="1"/>
</dbReference>
<dbReference type="Pfam" id="PF03539">
    <property type="entry name" value="Spuma_A9PTase"/>
    <property type="match status" value="1"/>
</dbReference>
<dbReference type="PRINTS" id="PR00920">
    <property type="entry name" value="SPUMVIRPTASE"/>
</dbReference>
<dbReference type="SUPFAM" id="SSF56672">
    <property type="entry name" value="DNA/RNA polymerases"/>
    <property type="match status" value="1"/>
</dbReference>
<dbReference type="SUPFAM" id="SSF53098">
    <property type="entry name" value="Ribonuclease H-like"/>
    <property type="match status" value="2"/>
</dbReference>
<dbReference type="PROSITE" id="PS51531">
    <property type="entry name" value="FV_PR"/>
    <property type="match status" value="1"/>
</dbReference>
<dbReference type="PROSITE" id="PS50994">
    <property type="entry name" value="INTEGRASE"/>
    <property type="match status" value="1"/>
</dbReference>
<dbReference type="PROSITE" id="PS50879">
    <property type="entry name" value="RNASE_H_1"/>
    <property type="match status" value="1"/>
</dbReference>
<dbReference type="PROSITE" id="PS50878">
    <property type="entry name" value="RT_POL"/>
    <property type="match status" value="1"/>
</dbReference>
<reference key="1">
    <citation type="journal article" date="1992" name="Virology">
        <title>Genomic organization and expression of simian foamy virus type 3 (SFV-3).</title>
        <authorList>
            <person name="Renne R."/>
            <person name="Friedl E."/>
            <person name="Schweizer M."/>
            <person name="Fleps U."/>
            <person name="Turek R."/>
            <person name="Neumann-Haefelin D."/>
        </authorList>
    </citation>
    <scope>NUCLEOTIDE SEQUENCE [GENOMIC DNA]</scope>
</reference>
<reference key="2">
    <citation type="journal article" date="2003" name="Curr. Top. Microbiol. Immunol.">
        <title>Proteolytic processing of foamy virus Gag and Pol proteins.</title>
        <authorList>
            <person name="Fluegel R.M."/>
            <person name="Pfrepper K.-I."/>
        </authorList>
    </citation>
    <scope>REVIEW</scope>
</reference>
<reference key="3">
    <citation type="journal article" date="2004" name="Curr. Opin. Microbiol.">
        <title>Foamy viruses-a world apart.</title>
        <authorList>
            <person name="Delelis O."/>
            <person name="Lehmann-Che J."/>
            <person name="Saib A."/>
        </authorList>
    </citation>
    <scope>REVIEW</scope>
</reference>
<proteinExistence type="inferred from homology"/>
<organism>
    <name type="scientific">Simian foamy virus type 3 (strain LK3)</name>
    <name type="common">SFVagm</name>
    <name type="synonym">SFV-3</name>
    <dbReference type="NCBI Taxonomy" id="11644"/>
    <lineage>
        <taxon>Viruses</taxon>
        <taxon>Riboviria</taxon>
        <taxon>Pararnavirae</taxon>
        <taxon>Artverviricota</taxon>
        <taxon>Revtraviricetes</taxon>
        <taxon>Ortervirales</taxon>
        <taxon>Retroviridae</taxon>
        <taxon>Spumaretrovirinae</taxon>
        <taxon>Spumavirus</taxon>
        <taxon>African green monkey simian foamy virus</taxon>
    </lineage>
</organism>
<sequence length="1143" mass="129615">MDPLQLLQPLEAEIKGTKLKAHWDSGATITCVPQAFLEEEVPIKNIWIKTIHGEKEQPVYYLTFKIQGRKVEAEVISSPYDYILVSPSDIPWLMKKPLQLTTLVPLQEYEERLLKQTMLTGSYKEKLQSLFLKYDALWQHWENQVGHRRIKPHHIATGTVNPRPQKQYPINPKAKASIQTVINDLLKQGVLIQQNSIMNTPVYPVPKPDGKWRMVLDYREVNKTIPLIAAQNQHSAGILSSIFRGKYKTTLDLSNGFWAHSITPESYWLTAFTWLGQQYCWTRLPQGFLNSPALFTADVVDLLKEVPNVQVYVDDIYISHDDPREHLEQLEKVFSLLLNAGYVVSLKKSEIAQHEVEFLGFNITKEGRGLTETFKQKLLNITPPRDLKQLQSILGLLNFARNFIPNFSELVKPLYNIIATANGKYITWTTDNSQQLQNIISMLNSAENLEERNPEVRLIMKVNTSPSAGYIRFYNEFAKRPIMYLNYVYTKAEVKFTNTEKLLTTIHKGLIKALDLGMGQEILVYSPIVSMTKIQKTPLPERKALPIRWITWMSYLEDPRIQFHYDKTLPELQQVPTVTDDIIAKIKHPSEFSMVFYTDGSAIKHPNVNKSHNAGMGIAQVQFKPEFTVINTWSIPLGDHTAQLAEVAAVEFACKKALKIDGPVLIVTDSFYVAESVNKELPYWQSNGFFNNKKKPLKHVSKWKSIADCIQLKPDIIIIHEKGHQPTASTFHTEGNNLADKLATQGSYVVNINTTPSLDAELDQLLQGQYPKGFPKHYQYQLENGQVMVTRPNGKRIIPPKSDRPQIILQAHNIAHTGRDSTFLKVSSKYWWPNLRKDVVKVIRQCKQCLVTNAATLAAPPILRPERPVKPFDKFFIDYIGPLPPSNGYLHVLVVVDSMTGFVWLYPTKAPSTSATVKALNMLTSIAVPKVIHSDQGAAFTSATFADWAKNKGIQLEFSTPYHPQSSGKVERKNSDIKRLLTKLLVGRPAKWYDLLPVVQLALNNSYSPSSKYTPHQLLFGIDSNTPFANSDTLDLSREEELSLLQEIRSSLYLPSTPPASIRAWSPSVGQLVQERVARPASLRPRWHKPTPVLEVINPRAVVILDHLGNRRTVSVDNLKLTAYQKDGTPNESAAVVAMEKDE</sequence>
<protein>
    <recommendedName>
        <fullName>Pro-Pol polyprotein</fullName>
    </recommendedName>
    <alternativeName>
        <fullName>Pr125Pol</fullName>
    </alternativeName>
    <component>
        <recommendedName>
            <fullName>Protease/Reverse transcriptase/ribonuclease H</fullName>
            <ecNumber>2.7.7.49</ecNumber>
            <ecNumber>2.7.7.7</ecNumber>
            <ecNumber>3.1.26.4</ecNumber>
            <ecNumber>3.4.23.-</ecNumber>
        </recommendedName>
        <alternativeName>
            <fullName>p87Pro-RT-RNaseH</fullName>
        </alternativeName>
    </component>
    <component>
        <recommendedName>
            <fullName>Protease/Reverse transcriptase</fullName>
            <ecNumber>2.7.7.49</ecNumber>
            <ecNumber>2.7.7.7</ecNumber>
            <ecNumber>3.4.23.-</ecNumber>
        </recommendedName>
        <alternativeName>
            <fullName>p65Pro-RT</fullName>
        </alternativeName>
    </component>
    <component>
        <recommendedName>
            <fullName>Ribonuclease H</fullName>
            <shortName>RNase H</shortName>
            <ecNumber>3.1.26.4</ecNumber>
        </recommendedName>
    </component>
    <component>
        <recommendedName>
            <fullName>Integrase</fullName>
            <shortName>IN</shortName>
            <ecNumber evidence="2">2.7.7.-</ecNumber>
            <ecNumber evidence="2">3.1.-.-</ecNumber>
        </recommendedName>
        <alternativeName>
            <fullName>p42In</fullName>
        </alternativeName>
    </component>
</protein>
<comment type="function">
    <text evidence="1">The aspartyl protease activity mediates proteolytic cleavages of Gag and Pol polyproteins. The reverse transcriptase (RT) activity converts the viral RNA genome into dsDNA in the cytoplasm, shortly after virus entry into the cell (early reverse transcription) or after proviral DNA transcription (late reverse transcription). RT consists of a DNA polymerase activity that can copy either DNA or RNA templates, and a ribonuclease H (RNase H) activity that cleaves the RNA strand of RNA-DNA heteroduplexes in a partially processive 3' to 5' endonucleasic mode. Conversion of viral genomic RNA into dsDNA requires many steps. A tRNA-Lys1,2 binds to the primer-binding site (PBS) situated at the 5'-end of the viral RNA. RT uses the 3' end of the tRNA primer to perform a short round of RNA-dependent minus-strand DNA synthesis. The reading proceeds through the U5 region and ends after the repeated (R) region which is present at both ends of viral RNA. The portion of the RNA-DNA heteroduplex is digested by the RNase H, resulting in a ssDNA product attached to the tRNA primer. This ssDNA/tRNA hybridizes with the identical R region situated at the 3' end of viral RNA. This template exchange, known as minus-strand DNA strong stop transfer, can be either intra- or intermolecular. RT uses the 3' end of this newly synthesized short ssDNA to perform the RNA-dependent minus-strand DNA synthesis of the whole template. RNase H digests the RNA template except for a polypurine tract (PPT) situated at the 5'-end and near the center of the genome. It is not clear if both polymerase and RNase H activities are simultaneous. RNase H probably can proceed both in a polymerase-dependent (RNA cut into small fragments by the same RT performing DNA synthesis) and a polymerase-independent mode (cleavage of remaining RNA fragments by free RTs). Secondly, RT performs DNA-directed plus-strand DNA synthesis using the PPT that has not been removed by RNase H as primer. PPT and tRNA primers are then removed by RNase H. The 3' and 5' ssDNA PBS regions hybridize to form a circular dsDNA intermediate. Strand displacement synthesis by RT to the PBS and PPT ends produces a blunt ended, linear dsDNA copy of the viral genome that includes long terminal repeats (LTRs) at both ends (By similarity).</text>
</comment>
<comment type="function">
    <text evidence="1">Integrase catalyzes viral DNA integration into the host chromosome, by performing a series of DNA cutting and joining reactions. This enzyme activity takes place after virion entry into a cell and reverse transcription of the RNA genome in dsDNA. The first step in the integration process is 3' processing. This step requires a complex comprising at least the viral genome, matrix protein, and integrase. This complex is called the pre-integration complex (PIC). The integrase protein removes 2 nucleotides from the 3' end of the viral DNA right (U5) end, leaving the left (U3) intact. In the second step, the PIC enters cell nucleus. This process is mediated through the integrase and allows the virus to infect both dividing (nuclear membrane disassembled) and G1/S-arrested cells (active translocation), but with no viral gene expression in the latter. In the third step, termed strand transfer, the integrase protein joins the previously processed 3' ends to the 5' ends of strands of target cellular DNA at the site of integration. It is however not clear how integration then proceeds to resolve the asymmetrical cleavage of viral DNA (By similarity).</text>
</comment>
<comment type="catalytic activity">
    <reaction evidence="4">
        <text>Endonucleolytic cleavage to 5'-phosphomonoester.</text>
        <dbReference type="EC" id="3.1.26.4"/>
    </reaction>
</comment>
<comment type="catalytic activity">
    <reaction evidence="3">
        <text>DNA(n) + a 2'-deoxyribonucleoside 5'-triphosphate = DNA(n+1) + diphosphate</text>
        <dbReference type="Rhea" id="RHEA:22508"/>
        <dbReference type="Rhea" id="RHEA-COMP:17339"/>
        <dbReference type="Rhea" id="RHEA-COMP:17340"/>
        <dbReference type="ChEBI" id="CHEBI:33019"/>
        <dbReference type="ChEBI" id="CHEBI:61560"/>
        <dbReference type="ChEBI" id="CHEBI:173112"/>
        <dbReference type="EC" id="2.7.7.49"/>
    </reaction>
</comment>
<comment type="catalytic activity">
    <reaction evidence="3">
        <text>DNA(n) + a 2'-deoxyribonucleoside 5'-triphosphate = DNA(n+1) + diphosphate</text>
        <dbReference type="Rhea" id="RHEA:22508"/>
        <dbReference type="Rhea" id="RHEA-COMP:17339"/>
        <dbReference type="Rhea" id="RHEA-COMP:17340"/>
        <dbReference type="ChEBI" id="CHEBI:33019"/>
        <dbReference type="ChEBI" id="CHEBI:61560"/>
        <dbReference type="ChEBI" id="CHEBI:173112"/>
        <dbReference type="EC" id="2.7.7.7"/>
    </reaction>
</comment>
<comment type="cofactor">
    <cofactor evidence="1">
        <name>Mg(2+)</name>
        <dbReference type="ChEBI" id="CHEBI:18420"/>
    </cofactor>
    <text evidence="1">Binds 2 magnesium ions for reverse transcriptase polymerase activity.</text>
</comment>
<comment type="cofactor">
    <cofactor evidence="1">
        <name>Mg(2+)</name>
        <dbReference type="ChEBI" id="CHEBI:18420"/>
    </cofactor>
    <text evidence="1">Binds 2 magnesium ions for ribonuclease H (RNase H) activity. Substrate-binding is a precondition for magnesium binding.</text>
</comment>
<comment type="cofactor">
    <cofactor evidence="1">
        <name>Mg(2+)</name>
        <dbReference type="ChEBI" id="CHEBI:18420"/>
    </cofactor>
    <text evidence="1">Magnesium ions are required for integrase activity. Binds at least 1, maybe 2 magnesium ions.</text>
</comment>
<comment type="subunit">
    <text evidence="6">The protease is a homodimer, whose active site consists of two apposed aspartic acid residues.</text>
</comment>
<comment type="subcellular location">
    <molecule>Integrase</molecule>
    <subcellularLocation>
        <location evidence="7">Virion</location>
    </subcellularLocation>
    <subcellularLocation>
        <location evidence="1">Host nucleus</location>
    </subcellularLocation>
    <subcellularLocation>
        <location evidence="7">Host cytoplasm</location>
    </subcellularLocation>
    <text evidence="7">Nuclear at initial phase, cytoplasmic at assembly.</text>
</comment>
<comment type="subcellular location">
    <molecule>Protease/Reverse transcriptase/ribonuclease H</molecule>
    <subcellularLocation>
        <location evidence="1">Host nucleus</location>
    </subcellularLocation>
    <subcellularLocation>
        <location evidence="7">Host cytoplasm</location>
    </subcellularLocation>
    <text evidence="7">Nuclear at initial phase, cytoplasmic at assembly.</text>
</comment>
<comment type="domain">
    <text evidence="1">The reverse transcriptase/ribonuclease H (RT) is structured in five subdomains: finger, palm, thumb, connection and RNase H. Within the palm subdomain, the 'primer grip' region is thought to be involved in the positioning of the primer terminus for accommodating the incoming nucleotide. The RNase H domain stabilizes the association of RT with primer-template (By similarity).</text>
</comment>
<comment type="domain">
    <text evidence="1">Integrase core domain contains the D-x(n)-D-x(35)-E motif, named for the phylogenetically conserved glutamic acid and aspartic acid residues and the invariant 35 amino acid spacing between the second and third acidic residues. Each acidic residue of the D,D(35)E motif is independently essential for the 3'-processing and strand transfer activities of purified integrase protein (By similarity).</text>
</comment>
<comment type="PTM">
    <text>Specific enzymatic cleavages in vivo by viral protease yield mature proteins. The protease is not cleaved off from Pol. Since cleavage efficiency is not optimal for all sites, long and active p65Pro-RT, p87Pro-RT-RNaseH and even some Pr125Pol are detected in infected cells.</text>
</comment>
<comment type="miscellaneous">
    <text>The reverse transcriptase is an error-prone enzyme that lacks a proof-reading function. High mutations rate is a direct consequence of this characteristic. RT also displays frequent template switching leading to high recombination rate. Recombination mostly occurs between homologous regions of the two copackaged RNA genomes. If these two RNA molecules derive from different viral strains, reverse transcription will give rise to highly recombinated proviral DNAs.</text>
</comment>
<comment type="miscellaneous">
    <text>Foamy viruses are distinct from other retroviruses in many respects. Their protease is active as an uncleaved Pro-Pol protein. Mature particles do not include the usual processed retroviral structural protein (MA, CA and NC), but instead contain two large Gag proteins. Their functional nucleic acid appears to be either RNA or dsDNA (up to 20% of extracellular particles), because they probably proceed either to an early (before integration) or late reverse transcription (after assembly). Foamy viruses have the ability to retrotranspose intracellularly with high efficiency. They bud predominantly into the endoplasmic reticulum (ER) and occasionally at the plasma membrane. Budding requires the presence of Env proteins. Most viral particles probably remain within the infected cell.</text>
</comment>
<comment type="sequence caution" evidence="7">
    <conflict type="erroneous initiation">
        <sequence resource="EMBL-CDS" id="AAA47796"/>
    </conflict>
</comment>
<name>POL_SFV3L</name>
<evidence type="ECO:0000250" key="1"/>
<evidence type="ECO:0000250" key="2">
    <source>
        <dbReference type="UniProtKB" id="Q87040"/>
    </source>
</evidence>
<evidence type="ECO:0000255" key="3">
    <source>
        <dbReference type="PROSITE-ProRule" id="PRU00405"/>
    </source>
</evidence>
<evidence type="ECO:0000255" key="4">
    <source>
        <dbReference type="PROSITE-ProRule" id="PRU00408"/>
    </source>
</evidence>
<evidence type="ECO:0000255" key="5">
    <source>
        <dbReference type="PROSITE-ProRule" id="PRU00457"/>
    </source>
</evidence>
<evidence type="ECO:0000255" key="6">
    <source>
        <dbReference type="PROSITE-ProRule" id="PRU00863"/>
    </source>
</evidence>
<evidence type="ECO:0000305" key="7"/>
<keyword id="KW-0064">Aspartyl protease</keyword>
<keyword id="KW-0229">DNA integration</keyword>
<keyword id="KW-0233">DNA recombination</keyword>
<keyword id="KW-0239">DNA-directed DNA polymerase</keyword>
<keyword id="KW-0255">Endonuclease</keyword>
<keyword id="KW-1035">Host cytoplasm</keyword>
<keyword id="KW-1048">Host nucleus</keyword>
<keyword id="KW-0378">Hydrolase</keyword>
<keyword id="KW-0460">Magnesium</keyword>
<keyword id="KW-0479">Metal-binding</keyword>
<keyword id="KW-0511">Multifunctional enzyme</keyword>
<keyword id="KW-0540">Nuclease</keyword>
<keyword id="KW-0548">Nucleotidyltransferase</keyword>
<keyword id="KW-0645">Protease</keyword>
<keyword id="KW-1185">Reference proteome</keyword>
<keyword id="KW-0694">RNA-binding</keyword>
<keyword id="KW-0695">RNA-directed DNA polymerase</keyword>
<keyword id="KW-0808">Transferase</keyword>
<keyword id="KW-1179">Viral genome integration</keyword>
<keyword id="KW-1163">Viral penetration into host nucleus</keyword>
<keyword id="KW-0946">Virion</keyword>
<keyword id="KW-1160">Virus entry into host cell</keyword>
<accession>P27401</accession>
<feature type="chain" id="PRO_0000125485" description="Pro-Pol polyprotein">
    <location>
        <begin position="1"/>
        <end position="1143"/>
    </location>
</feature>
<feature type="chain" id="PRO_0000245451" description="Protease/Reverse transcriptase/ribonuclease H" evidence="1">
    <location>
        <begin position="1"/>
        <end position="751"/>
    </location>
</feature>
<feature type="chain" id="PRO_0000245452" description="Protease/Reverse transcriptase" evidence="1">
    <location>
        <begin position="1"/>
        <end position="596"/>
    </location>
</feature>
<feature type="chain" id="PRO_0000245453" description="Ribonuclease H" evidence="1">
    <location>
        <begin position="597"/>
        <end position="751"/>
    </location>
</feature>
<feature type="chain" id="PRO_0000245454" description="Integrase" evidence="1">
    <location>
        <begin position="752"/>
        <end position="1143"/>
    </location>
</feature>
<feature type="domain" description="Peptidase A9" evidence="6">
    <location>
        <begin position="1"/>
        <end position="143"/>
    </location>
</feature>
<feature type="domain" description="Reverse transcriptase" evidence="3">
    <location>
        <begin position="186"/>
        <end position="363"/>
    </location>
</feature>
<feature type="domain" description="RNase H type-1" evidence="4">
    <location>
        <begin position="590"/>
        <end position="748"/>
    </location>
</feature>
<feature type="domain" description="Integrase catalytic" evidence="5">
    <location>
        <begin position="864"/>
        <end position="1023"/>
    </location>
</feature>
<feature type="active site" description="For protease activity" evidence="6">
    <location>
        <position position="24"/>
    </location>
</feature>
<feature type="binding site" evidence="1">
    <location>
        <position position="252"/>
    </location>
    <ligand>
        <name>Mg(2+)</name>
        <dbReference type="ChEBI" id="CHEBI:18420"/>
        <label>1</label>
        <note>catalytic; for reverse transcriptase activity</note>
    </ligand>
</feature>
<feature type="binding site" evidence="1">
    <location>
        <position position="314"/>
    </location>
    <ligand>
        <name>Mg(2+)</name>
        <dbReference type="ChEBI" id="CHEBI:18420"/>
        <label>1</label>
        <note>catalytic; for reverse transcriptase activity</note>
    </ligand>
</feature>
<feature type="binding site" evidence="1">
    <location>
        <position position="315"/>
    </location>
    <ligand>
        <name>Mg(2+)</name>
        <dbReference type="ChEBI" id="CHEBI:18420"/>
        <label>1</label>
        <note>catalytic; for reverse transcriptase activity</note>
    </ligand>
</feature>
<feature type="binding site" evidence="1">
    <location>
        <position position="599"/>
    </location>
    <ligand>
        <name>Mg(2+)</name>
        <dbReference type="ChEBI" id="CHEBI:18420"/>
        <label>2</label>
        <note>catalytic; for RNase H activity</note>
    </ligand>
</feature>
<feature type="binding site" evidence="1">
    <location>
        <position position="646"/>
    </location>
    <ligand>
        <name>Mg(2+)</name>
        <dbReference type="ChEBI" id="CHEBI:18420"/>
        <label>2</label>
        <note>catalytic; for RNase H activity</note>
    </ligand>
</feature>
<feature type="binding site" evidence="1">
    <location>
        <position position="669"/>
    </location>
    <ligand>
        <name>Mg(2+)</name>
        <dbReference type="ChEBI" id="CHEBI:18420"/>
        <label>2</label>
        <note>catalytic; for RNase H activity</note>
    </ligand>
</feature>
<feature type="binding site" evidence="1">
    <location>
        <position position="740"/>
    </location>
    <ligand>
        <name>Mg(2+)</name>
        <dbReference type="ChEBI" id="CHEBI:18420"/>
        <label>2</label>
        <note>catalytic; for RNase H activity</note>
    </ligand>
</feature>
<feature type="binding site" evidence="1">
    <location>
        <position position="873"/>
    </location>
    <ligand>
        <name>Mg(2+)</name>
        <dbReference type="ChEBI" id="CHEBI:18420"/>
        <label>3</label>
        <note>catalytic; for integrase activity</note>
    </ligand>
</feature>
<feature type="binding site" evidence="1">
    <location>
        <position position="935"/>
    </location>
    <ligand>
        <name>Mg(2+)</name>
        <dbReference type="ChEBI" id="CHEBI:18420"/>
        <label>3</label>
        <note>catalytic; for integrase activity</note>
    </ligand>
</feature>
<feature type="site" description="Cleavage; by viral protease; partial" evidence="1">
    <location>
        <begin position="596"/>
        <end position="597"/>
    </location>
</feature>
<feature type="site" description="Cleavage; by viral protease" evidence="1">
    <location>
        <begin position="751"/>
        <end position="752"/>
    </location>
</feature>
<organismHost>
    <name type="scientific">Chlorocebus aethiops</name>
    <name type="common">Green monkey</name>
    <name type="synonym">Cercopithecus aethiops</name>
    <dbReference type="NCBI Taxonomy" id="9534"/>
</organismHost>
<organismHost>
    <name type="scientific">Homo sapiens</name>
    <name type="common">Human</name>
    <dbReference type="NCBI Taxonomy" id="9606"/>
</organismHost>
<gene>
    <name type="primary">pol</name>
</gene>